<protein>
    <recommendedName>
        <fullName evidence="1">Bifunctional protein FolD</fullName>
    </recommendedName>
    <domain>
        <recommendedName>
            <fullName evidence="1">Methylenetetrahydrofolate dehydrogenase</fullName>
            <ecNumber evidence="1">1.5.1.5</ecNumber>
        </recommendedName>
    </domain>
    <domain>
        <recommendedName>
            <fullName evidence="1">Methenyltetrahydrofolate cyclohydrolase</fullName>
            <ecNumber evidence="1">3.5.4.9</ecNumber>
        </recommendedName>
    </domain>
</protein>
<gene>
    <name evidence="1" type="primary">folD</name>
    <name type="ordered locus">DIP0620</name>
</gene>
<dbReference type="EC" id="1.5.1.5" evidence="1"/>
<dbReference type="EC" id="3.5.4.9" evidence="1"/>
<dbReference type="EMBL" id="BX248355">
    <property type="protein sequence ID" value="CAE49137.1"/>
    <property type="molecule type" value="Genomic_DNA"/>
</dbReference>
<dbReference type="RefSeq" id="WP_010934425.1">
    <property type="nucleotide sequence ID" value="NC_002935.2"/>
</dbReference>
<dbReference type="SMR" id="Q6NIZ6"/>
<dbReference type="STRING" id="257309.DIP0620"/>
<dbReference type="KEGG" id="cdi:DIP0620"/>
<dbReference type="HOGENOM" id="CLU_034045_3_0_11"/>
<dbReference type="UniPathway" id="UPA00193"/>
<dbReference type="Proteomes" id="UP000002198">
    <property type="component" value="Chromosome"/>
</dbReference>
<dbReference type="GO" id="GO:0005829">
    <property type="term" value="C:cytosol"/>
    <property type="evidence" value="ECO:0007669"/>
    <property type="project" value="TreeGrafter"/>
</dbReference>
<dbReference type="GO" id="GO:0004477">
    <property type="term" value="F:methenyltetrahydrofolate cyclohydrolase activity"/>
    <property type="evidence" value="ECO:0007669"/>
    <property type="project" value="UniProtKB-UniRule"/>
</dbReference>
<dbReference type="GO" id="GO:0004488">
    <property type="term" value="F:methylenetetrahydrofolate dehydrogenase (NADP+) activity"/>
    <property type="evidence" value="ECO:0007669"/>
    <property type="project" value="UniProtKB-UniRule"/>
</dbReference>
<dbReference type="GO" id="GO:0000105">
    <property type="term" value="P:L-histidine biosynthetic process"/>
    <property type="evidence" value="ECO:0007669"/>
    <property type="project" value="UniProtKB-KW"/>
</dbReference>
<dbReference type="GO" id="GO:0009086">
    <property type="term" value="P:methionine biosynthetic process"/>
    <property type="evidence" value="ECO:0007669"/>
    <property type="project" value="UniProtKB-KW"/>
</dbReference>
<dbReference type="GO" id="GO:0006164">
    <property type="term" value="P:purine nucleotide biosynthetic process"/>
    <property type="evidence" value="ECO:0007669"/>
    <property type="project" value="UniProtKB-KW"/>
</dbReference>
<dbReference type="GO" id="GO:0035999">
    <property type="term" value="P:tetrahydrofolate interconversion"/>
    <property type="evidence" value="ECO:0007669"/>
    <property type="project" value="UniProtKB-UniRule"/>
</dbReference>
<dbReference type="CDD" id="cd01080">
    <property type="entry name" value="NAD_bind_m-THF_DH_Cyclohyd"/>
    <property type="match status" value="1"/>
</dbReference>
<dbReference type="FunFam" id="3.40.50.720:FF:000094">
    <property type="entry name" value="Bifunctional protein FolD"/>
    <property type="match status" value="1"/>
</dbReference>
<dbReference type="FunFam" id="3.40.50.10860:FF:000005">
    <property type="entry name" value="C-1-tetrahydrofolate synthase, cytoplasmic, putative"/>
    <property type="match status" value="1"/>
</dbReference>
<dbReference type="Gene3D" id="3.40.50.10860">
    <property type="entry name" value="Leucine Dehydrogenase, chain A, domain 1"/>
    <property type="match status" value="1"/>
</dbReference>
<dbReference type="Gene3D" id="3.40.50.720">
    <property type="entry name" value="NAD(P)-binding Rossmann-like Domain"/>
    <property type="match status" value="1"/>
</dbReference>
<dbReference type="HAMAP" id="MF_01576">
    <property type="entry name" value="THF_DHG_CYH"/>
    <property type="match status" value="1"/>
</dbReference>
<dbReference type="InterPro" id="IPR046346">
    <property type="entry name" value="Aminoacid_DH-like_N_sf"/>
</dbReference>
<dbReference type="InterPro" id="IPR036291">
    <property type="entry name" value="NAD(P)-bd_dom_sf"/>
</dbReference>
<dbReference type="InterPro" id="IPR000672">
    <property type="entry name" value="THF_DH/CycHdrlase"/>
</dbReference>
<dbReference type="InterPro" id="IPR020630">
    <property type="entry name" value="THF_DH/CycHdrlase_cat_dom"/>
</dbReference>
<dbReference type="InterPro" id="IPR020631">
    <property type="entry name" value="THF_DH/CycHdrlase_NAD-bd_dom"/>
</dbReference>
<dbReference type="NCBIfam" id="NF010789">
    <property type="entry name" value="PRK14193.1"/>
    <property type="match status" value="1"/>
</dbReference>
<dbReference type="PANTHER" id="PTHR48099:SF5">
    <property type="entry name" value="C-1-TETRAHYDROFOLATE SYNTHASE, CYTOPLASMIC"/>
    <property type="match status" value="1"/>
</dbReference>
<dbReference type="PANTHER" id="PTHR48099">
    <property type="entry name" value="C-1-TETRAHYDROFOLATE SYNTHASE, CYTOPLASMIC-RELATED"/>
    <property type="match status" value="1"/>
</dbReference>
<dbReference type="Pfam" id="PF00763">
    <property type="entry name" value="THF_DHG_CYH"/>
    <property type="match status" value="1"/>
</dbReference>
<dbReference type="Pfam" id="PF02882">
    <property type="entry name" value="THF_DHG_CYH_C"/>
    <property type="match status" value="1"/>
</dbReference>
<dbReference type="PRINTS" id="PR00085">
    <property type="entry name" value="THFDHDRGNASE"/>
</dbReference>
<dbReference type="SUPFAM" id="SSF53223">
    <property type="entry name" value="Aminoacid dehydrogenase-like, N-terminal domain"/>
    <property type="match status" value="1"/>
</dbReference>
<dbReference type="SUPFAM" id="SSF51735">
    <property type="entry name" value="NAD(P)-binding Rossmann-fold domains"/>
    <property type="match status" value="1"/>
</dbReference>
<name>FOLD_CORDI</name>
<sequence>MSAIKLDGNLYRDEIFEDLKGRVNSLREKGIVPGLATVLVGDDPASHAYVRMKHKDCEIVGVKSIRKDLPADVTQEELLAVIDDLNADPECTGYIVQLPLPKHLDENAVLERIDPAKDADGLHPVNLGKLVLNEPAPLPCTPNGAIHLLRRFGVELDGKKVVVIGRGVTVGRPIGLMLTRRSENSTVTLCHTGTRDLAAETREADVIVAAAGKAHMLTADMVKQGAAILDVGVSRVDGKLLGDVHPDVWDVAGAVSPNPGGVGPLTRAFLIRNVVERAERA</sequence>
<reference key="1">
    <citation type="journal article" date="2003" name="Nucleic Acids Res.">
        <title>The complete genome sequence and analysis of Corynebacterium diphtheriae NCTC13129.</title>
        <authorList>
            <person name="Cerdeno-Tarraga A.-M."/>
            <person name="Efstratiou A."/>
            <person name="Dover L.G."/>
            <person name="Holden M.T.G."/>
            <person name="Pallen M.J."/>
            <person name="Bentley S.D."/>
            <person name="Besra G.S."/>
            <person name="Churcher C.M."/>
            <person name="James K.D."/>
            <person name="De Zoysa A."/>
            <person name="Chillingworth T."/>
            <person name="Cronin A."/>
            <person name="Dowd L."/>
            <person name="Feltwell T."/>
            <person name="Hamlin N."/>
            <person name="Holroyd S."/>
            <person name="Jagels K."/>
            <person name="Moule S."/>
            <person name="Quail M.A."/>
            <person name="Rabbinowitsch E."/>
            <person name="Rutherford K.M."/>
            <person name="Thomson N.R."/>
            <person name="Unwin L."/>
            <person name="Whitehead S."/>
            <person name="Barrell B.G."/>
            <person name="Parkhill J."/>
        </authorList>
    </citation>
    <scope>NUCLEOTIDE SEQUENCE [LARGE SCALE GENOMIC DNA]</scope>
    <source>
        <strain>ATCC 700971 / NCTC 13129 / Biotype gravis</strain>
    </source>
</reference>
<keyword id="KW-0028">Amino-acid biosynthesis</keyword>
<keyword id="KW-0368">Histidine biosynthesis</keyword>
<keyword id="KW-0378">Hydrolase</keyword>
<keyword id="KW-0486">Methionine biosynthesis</keyword>
<keyword id="KW-0511">Multifunctional enzyme</keyword>
<keyword id="KW-0521">NADP</keyword>
<keyword id="KW-0554">One-carbon metabolism</keyword>
<keyword id="KW-0560">Oxidoreductase</keyword>
<keyword id="KW-0658">Purine biosynthesis</keyword>
<keyword id="KW-1185">Reference proteome</keyword>
<accession>Q6NIZ6</accession>
<feature type="chain" id="PRO_0000268323" description="Bifunctional protein FolD">
    <location>
        <begin position="1"/>
        <end position="281"/>
    </location>
</feature>
<feature type="binding site" evidence="1">
    <location>
        <begin position="165"/>
        <end position="167"/>
    </location>
    <ligand>
        <name>NADP(+)</name>
        <dbReference type="ChEBI" id="CHEBI:58349"/>
    </ligand>
</feature>
<feature type="binding site" evidence="1">
    <location>
        <position position="192"/>
    </location>
    <ligand>
        <name>NADP(+)</name>
        <dbReference type="ChEBI" id="CHEBI:58349"/>
    </ligand>
</feature>
<feature type="binding site" evidence="1">
    <location>
        <position position="233"/>
    </location>
    <ligand>
        <name>NADP(+)</name>
        <dbReference type="ChEBI" id="CHEBI:58349"/>
    </ligand>
</feature>
<comment type="function">
    <text evidence="1">Catalyzes the oxidation of 5,10-methylenetetrahydrofolate to 5,10-methenyltetrahydrofolate and then the hydrolysis of 5,10-methenyltetrahydrofolate to 10-formyltetrahydrofolate.</text>
</comment>
<comment type="catalytic activity">
    <reaction evidence="1">
        <text>(6R)-5,10-methylene-5,6,7,8-tetrahydrofolate + NADP(+) = (6R)-5,10-methenyltetrahydrofolate + NADPH</text>
        <dbReference type="Rhea" id="RHEA:22812"/>
        <dbReference type="ChEBI" id="CHEBI:15636"/>
        <dbReference type="ChEBI" id="CHEBI:57455"/>
        <dbReference type="ChEBI" id="CHEBI:57783"/>
        <dbReference type="ChEBI" id="CHEBI:58349"/>
        <dbReference type="EC" id="1.5.1.5"/>
    </reaction>
</comment>
<comment type="catalytic activity">
    <reaction evidence="1">
        <text>(6R)-5,10-methenyltetrahydrofolate + H2O = (6R)-10-formyltetrahydrofolate + H(+)</text>
        <dbReference type="Rhea" id="RHEA:23700"/>
        <dbReference type="ChEBI" id="CHEBI:15377"/>
        <dbReference type="ChEBI" id="CHEBI:15378"/>
        <dbReference type="ChEBI" id="CHEBI:57455"/>
        <dbReference type="ChEBI" id="CHEBI:195366"/>
        <dbReference type="EC" id="3.5.4.9"/>
    </reaction>
</comment>
<comment type="pathway">
    <text evidence="1">One-carbon metabolism; tetrahydrofolate interconversion.</text>
</comment>
<comment type="subunit">
    <text evidence="1">Homodimer.</text>
</comment>
<comment type="similarity">
    <text evidence="1">Belongs to the tetrahydrofolate dehydrogenase/cyclohydrolase family.</text>
</comment>
<organism>
    <name type="scientific">Corynebacterium diphtheriae (strain ATCC 700971 / NCTC 13129 / Biotype gravis)</name>
    <dbReference type="NCBI Taxonomy" id="257309"/>
    <lineage>
        <taxon>Bacteria</taxon>
        <taxon>Bacillati</taxon>
        <taxon>Actinomycetota</taxon>
        <taxon>Actinomycetes</taxon>
        <taxon>Mycobacteriales</taxon>
        <taxon>Corynebacteriaceae</taxon>
        <taxon>Corynebacterium</taxon>
    </lineage>
</organism>
<evidence type="ECO:0000255" key="1">
    <source>
        <dbReference type="HAMAP-Rule" id="MF_01576"/>
    </source>
</evidence>
<proteinExistence type="inferred from homology"/>